<proteinExistence type="inferred from homology"/>
<keyword id="KW-0378">Hydrolase</keyword>
<keyword id="KW-0441">Lipid A biosynthesis</keyword>
<keyword id="KW-0444">Lipid biosynthesis</keyword>
<keyword id="KW-0443">Lipid metabolism</keyword>
<keyword id="KW-0479">Metal-binding</keyword>
<keyword id="KW-0862">Zinc</keyword>
<comment type="function">
    <text evidence="1">Catalyzes the hydrolysis of UDP-3-O-myristoyl-N-acetylglucosamine to form UDP-3-O-myristoylglucosamine and acetate, the committed step in lipid A biosynthesis.</text>
</comment>
<comment type="catalytic activity">
    <reaction evidence="1">
        <text>a UDP-3-O-[(3R)-3-hydroxyacyl]-N-acetyl-alpha-D-glucosamine + H2O = a UDP-3-O-[(3R)-3-hydroxyacyl]-alpha-D-glucosamine + acetate</text>
        <dbReference type="Rhea" id="RHEA:67816"/>
        <dbReference type="ChEBI" id="CHEBI:15377"/>
        <dbReference type="ChEBI" id="CHEBI:30089"/>
        <dbReference type="ChEBI" id="CHEBI:137740"/>
        <dbReference type="ChEBI" id="CHEBI:173225"/>
        <dbReference type="EC" id="3.5.1.108"/>
    </reaction>
</comment>
<comment type="cofactor">
    <cofactor evidence="1">
        <name>Zn(2+)</name>
        <dbReference type="ChEBI" id="CHEBI:29105"/>
    </cofactor>
</comment>
<comment type="pathway">
    <text evidence="1">Glycolipid biosynthesis; lipid IV(A) biosynthesis; lipid IV(A) from (3R)-3-hydroxytetradecanoyl-[acyl-carrier-protein] and UDP-N-acetyl-alpha-D-glucosamine: step 2/6.</text>
</comment>
<comment type="similarity">
    <text evidence="1">Belongs to the LpxC family.</text>
</comment>
<name>LPXC_VIBVY</name>
<gene>
    <name evidence="1" type="primary">lpxC</name>
    <name type="ordered locus">VV0619</name>
</gene>
<feature type="chain" id="PRO_0000191965" description="UDP-3-O-acyl-N-acetylglucosamine deacetylase">
    <location>
        <begin position="1"/>
        <end position="305"/>
    </location>
</feature>
<feature type="active site" description="Proton donor" evidence="1">
    <location>
        <position position="265"/>
    </location>
</feature>
<feature type="binding site" evidence="1">
    <location>
        <position position="79"/>
    </location>
    <ligand>
        <name>Zn(2+)</name>
        <dbReference type="ChEBI" id="CHEBI:29105"/>
    </ligand>
</feature>
<feature type="binding site" evidence="1">
    <location>
        <position position="238"/>
    </location>
    <ligand>
        <name>Zn(2+)</name>
        <dbReference type="ChEBI" id="CHEBI:29105"/>
    </ligand>
</feature>
<feature type="binding site" evidence="1">
    <location>
        <position position="242"/>
    </location>
    <ligand>
        <name>Zn(2+)</name>
        <dbReference type="ChEBI" id="CHEBI:29105"/>
    </ligand>
</feature>
<protein>
    <recommendedName>
        <fullName evidence="1">UDP-3-O-acyl-N-acetylglucosamine deacetylase</fullName>
        <shortName evidence="1">UDP-3-O-acyl-GlcNAc deacetylase</shortName>
        <ecNumber evidence="1">3.5.1.108</ecNumber>
    </recommendedName>
    <alternativeName>
        <fullName evidence="1">UDP-3-O-[R-3-hydroxymyristoyl]-N-acetylglucosamine deacetylase</fullName>
    </alternativeName>
</protein>
<organism>
    <name type="scientific">Vibrio vulnificus (strain YJ016)</name>
    <dbReference type="NCBI Taxonomy" id="196600"/>
    <lineage>
        <taxon>Bacteria</taxon>
        <taxon>Pseudomonadati</taxon>
        <taxon>Pseudomonadota</taxon>
        <taxon>Gammaproteobacteria</taxon>
        <taxon>Vibrionales</taxon>
        <taxon>Vibrionaceae</taxon>
        <taxon>Vibrio</taxon>
    </lineage>
</organism>
<sequence length="305" mass="34207">MIRQRTLKEIVKTTGVGLHSGRKVTLTLRPAAANTGIIYRRTDLTPAVDFPADPASVRDTMLCTALVNDEGVRISTVEHLNAALAGMGIDNIIIEVDAPEIPIMDGSASPFVYLLQQAGIETQNAAKRFIRIKKPVRFEDGDKWAEFVPFNGFRMDFEIEFNHPAIDSDEQRLLFDFSTQGFVREISRARTFGFMRDIEYLQSQNLVLGGSFDNAIVLDDYRILNEEGLRFENEFVTHKVLDAIGDLYMCGHAIIGEFRAYKSGHGLNNQLLRAVLADQEAWEWTTFEEEVGSPVAFAEPNMVLA</sequence>
<accession>Q7MNU6</accession>
<dbReference type="EC" id="3.5.1.108" evidence="1"/>
<dbReference type="EMBL" id="BA000037">
    <property type="protein sequence ID" value="BAC93383.1"/>
    <property type="molecule type" value="Genomic_DNA"/>
</dbReference>
<dbReference type="RefSeq" id="WP_011078658.1">
    <property type="nucleotide sequence ID" value="NC_005139.1"/>
</dbReference>
<dbReference type="SMR" id="Q7MNU6"/>
<dbReference type="STRING" id="672.VV93_v1c05620"/>
<dbReference type="KEGG" id="vvy:VV0619"/>
<dbReference type="eggNOG" id="COG0774">
    <property type="taxonomic scope" value="Bacteria"/>
</dbReference>
<dbReference type="HOGENOM" id="CLU_046528_1_0_6"/>
<dbReference type="UniPathway" id="UPA00359">
    <property type="reaction ID" value="UER00478"/>
</dbReference>
<dbReference type="Proteomes" id="UP000002675">
    <property type="component" value="Chromosome I"/>
</dbReference>
<dbReference type="GO" id="GO:0016020">
    <property type="term" value="C:membrane"/>
    <property type="evidence" value="ECO:0007669"/>
    <property type="project" value="GOC"/>
</dbReference>
<dbReference type="GO" id="GO:0046872">
    <property type="term" value="F:metal ion binding"/>
    <property type="evidence" value="ECO:0007669"/>
    <property type="project" value="UniProtKB-KW"/>
</dbReference>
<dbReference type="GO" id="GO:0103117">
    <property type="term" value="F:UDP-3-O-acyl-N-acetylglucosamine deacetylase activity"/>
    <property type="evidence" value="ECO:0007669"/>
    <property type="project" value="UniProtKB-UniRule"/>
</dbReference>
<dbReference type="GO" id="GO:0009245">
    <property type="term" value="P:lipid A biosynthetic process"/>
    <property type="evidence" value="ECO:0007669"/>
    <property type="project" value="UniProtKB-UniRule"/>
</dbReference>
<dbReference type="FunFam" id="3.30.1700.10:FF:000001">
    <property type="entry name" value="UDP-3-O-acyl-N-acetylglucosamine deacetylase"/>
    <property type="match status" value="1"/>
</dbReference>
<dbReference type="FunFam" id="3.30.230.20:FF:000001">
    <property type="entry name" value="UDP-3-O-acyl-N-acetylglucosamine deacetylase"/>
    <property type="match status" value="1"/>
</dbReference>
<dbReference type="Gene3D" id="3.30.230.20">
    <property type="entry name" value="lpxc deacetylase, domain 1"/>
    <property type="match status" value="1"/>
</dbReference>
<dbReference type="Gene3D" id="3.30.1700.10">
    <property type="entry name" value="lpxc deacetylase, domain 2"/>
    <property type="match status" value="1"/>
</dbReference>
<dbReference type="HAMAP" id="MF_00388">
    <property type="entry name" value="LpxC"/>
    <property type="match status" value="1"/>
</dbReference>
<dbReference type="InterPro" id="IPR020568">
    <property type="entry name" value="Ribosomal_Su5_D2-typ_SF"/>
</dbReference>
<dbReference type="InterPro" id="IPR004463">
    <property type="entry name" value="UDP-acyl_GlcNac_deAcase"/>
</dbReference>
<dbReference type="InterPro" id="IPR011334">
    <property type="entry name" value="UDP-acyl_GlcNac_deAcase_C"/>
</dbReference>
<dbReference type="InterPro" id="IPR015870">
    <property type="entry name" value="UDP-acyl_N-AcGlcN_deAcase_N"/>
</dbReference>
<dbReference type="NCBIfam" id="TIGR00325">
    <property type="entry name" value="lpxC"/>
    <property type="match status" value="1"/>
</dbReference>
<dbReference type="PANTHER" id="PTHR33694">
    <property type="entry name" value="UDP-3-O-ACYL-N-ACETYLGLUCOSAMINE DEACETYLASE 1, MITOCHONDRIAL-RELATED"/>
    <property type="match status" value="1"/>
</dbReference>
<dbReference type="PANTHER" id="PTHR33694:SF1">
    <property type="entry name" value="UDP-3-O-ACYL-N-ACETYLGLUCOSAMINE DEACETYLASE 1, MITOCHONDRIAL-RELATED"/>
    <property type="match status" value="1"/>
</dbReference>
<dbReference type="Pfam" id="PF03331">
    <property type="entry name" value="LpxC"/>
    <property type="match status" value="1"/>
</dbReference>
<dbReference type="SUPFAM" id="SSF54211">
    <property type="entry name" value="Ribosomal protein S5 domain 2-like"/>
    <property type="match status" value="2"/>
</dbReference>
<evidence type="ECO:0000255" key="1">
    <source>
        <dbReference type="HAMAP-Rule" id="MF_00388"/>
    </source>
</evidence>
<reference key="1">
    <citation type="journal article" date="2003" name="Genome Res.">
        <title>Comparative genome analysis of Vibrio vulnificus, a marine pathogen.</title>
        <authorList>
            <person name="Chen C.-Y."/>
            <person name="Wu K.-M."/>
            <person name="Chang Y.-C."/>
            <person name="Chang C.-H."/>
            <person name="Tsai H.-C."/>
            <person name="Liao T.-L."/>
            <person name="Liu Y.-M."/>
            <person name="Chen H.-J."/>
            <person name="Shen A.B.-T."/>
            <person name="Li J.-C."/>
            <person name="Su T.-L."/>
            <person name="Shao C.-P."/>
            <person name="Lee C.-T."/>
            <person name="Hor L.-I."/>
            <person name="Tsai S.-F."/>
        </authorList>
    </citation>
    <scope>NUCLEOTIDE SEQUENCE [LARGE SCALE GENOMIC DNA]</scope>
    <source>
        <strain>YJ016</strain>
    </source>
</reference>